<name>DNAE2_XANOR</name>
<sequence>MSWDDAIEGVDRDTPGGRMPRAWNVAARLRAANDDISHAHVADGVPTYAELHCLSDFSFLRGASSAEQLFARAQHCGYSALAITDECSLAGIVRGLEASRVTGVRLIVGSEFTLIDGTRFVLLVENAHGYPQVCGLVTTARRAASKGAYRLGRADVEAQFRDVAPGVFALWLPGVQPQAEQGAWLQQVFGERAFLAVELHREQDDGARLQVLQALAQQLGMTAVASGDVHMAQRRERIVQDTLTAIRHTLPLAECGAHLFRNGERHLRTRRALGNIYPDALLQAAVALAQRCTFDISKISYTYPRELVPEGHTPTSYLRQLTEAGIRKRWPGGITAKVREDIEKELALIALKKYEAFFLTVQDVVRFAREQNILCQGRGSSANSAVCYALGITAVNPDETRLLMARFLSEKRDEPPDIDVDFEHERREEVLQYVYRKYGRERAALAATVICYRGKSAVRDVAKAFGLPPDQIALLANCYGWGNGETPMEQRIEEAGFDLANPLINKILLVTEHLRDHPRHLSQHVGGFVISDEPLSLLVPVENAAMADRTIIQWDKDDLETMKLLKVDCLALGMLTCIRKTLDLVRGHRGRDYSIATLPGEDLPTYKMIQRADTVGVFQIESRAQMAMLPRLKPAEFYDLVIEVAIVRPGPIQGDMVHPYLRRRQGREDVSYPSPAVEDILKPTLGVPLFQEQVMELLMHAADYTESEADNLRRSMAAWRRGGDMEQHRMRVRERMQGKGYASTFIDQIFEQIKGFGSYGFPQSHAASFAKLVYASCWLKRHEPAAFACGLLNAQPMGFYSASQIVQDARRGSPERERVEVLPVDVVHSDWDNTLVGGRPWRSAADPGEQPAIRLGMRQVAGLSDVVAQRIVAARTQRAFADIGDLCLRAALDEKACLALAEAGALQGMVGNRNAARWAMAGVEARRPLLPGSPEERPVAFEAPHAGEEILADYRSVGLSLRQHPMALLRPQMRQRRILGLRDLQGRPHGSGVHVAGLVTQRQRPATAKGTIFVTLEDEHGMINVIVWSHLALRRRRALLESRLLAVRGRWERVDGVEHLIAGDLHDLSDLLGDMQLPSRDFH</sequence>
<reference key="1">
    <citation type="journal article" date="2005" name="Nucleic Acids Res.">
        <title>The genome sequence of Xanthomonas oryzae pathovar oryzae KACC10331, the bacterial blight pathogen of rice.</title>
        <authorList>
            <person name="Lee B.-M."/>
            <person name="Park Y.-J."/>
            <person name="Park D.-S."/>
            <person name="Kang H.-W."/>
            <person name="Kim J.-G."/>
            <person name="Song E.-S."/>
            <person name="Park I.-C."/>
            <person name="Yoon U.-H."/>
            <person name="Hahn J.-H."/>
            <person name="Koo B.-S."/>
            <person name="Lee G.-B."/>
            <person name="Kim H."/>
            <person name="Park H.-S."/>
            <person name="Yoon K.-O."/>
            <person name="Kim J.-H."/>
            <person name="Jung C.-H."/>
            <person name="Koh N.-H."/>
            <person name="Seo J.-S."/>
            <person name="Go S.-J."/>
        </authorList>
    </citation>
    <scope>NUCLEOTIDE SEQUENCE [LARGE SCALE GENOMIC DNA]</scope>
    <source>
        <strain>KACC10331 / KXO85</strain>
    </source>
</reference>
<dbReference type="EC" id="2.7.7.7" evidence="1"/>
<dbReference type="EMBL" id="AE013598">
    <property type="protein sequence ID" value="AAW76693.1"/>
    <property type="molecule type" value="Genomic_DNA"/>
</dbReference>
<dbReference type="SMR" id="Q5GX78"/>
<dbReference type="STRING" id="291331.XOO3439"/>
<dbReference type="KEGG" id="xoo:XOO3439"/>
<dbReference type="PATRIC" id="fig|291331.8.peg.3800"/>
<dbReference type="HOGENOM" id="CLU_001600_4_0_6"/>
<dbReference type="Proteomes" id="UP000006735">
    <property type="component" value="Chromosome"/>
</dbReference>
<dbReference type="GO" id="GO:0005737">
    <property type="term" value="C:cytoplasm"/>
    <property type="evidence" value="ECO:0007669"/>
    <property type="project" value="UniProtKB-SubCell"/>
</dbReference>
<dbReference type="GO" id="GO:0008408">
    <property type="term" value="F:3'-5' exonuclease activity"/>
    <property type="evidence" value="ECO:0007669"/>
    <property type="project" value="InterPro"/>
</dbReference>
<dbReference type="GO" id="GO:0003887">
    <property type="term" value="F:DNA-directed DNA polymerase activity"/>
    <property type="evidence" value="ECO:0007669"/>
    <property type="project" value="UniProtKB-UniRule"/>
</dbReference>
<dbReference type="GO" id="GO:0003676">
    <property type="term" value="F:nucleic acid binding"/>
    <property type="evidence" value="ECO:0007669"/>
    <property type="project" value="InterPro"/>
</dbReference>
<dbReference type="GO" id="GO:0006281">
    <property type="term" value="P:DNA repair"/>
    <property type="evidence" value="ECO:0007669"/>
    <property type="project" value="UniProtKB-UniRule"/>
</dbReference>
<dbReference type="GO" id="GO:0006260">
    <property type="term" value="P:DNA replication"/>
    <property type="evidence" value="ECO:0007669"/>
    <property type="project" value="UniProtKB-KW"/>
</dbReference>
<dbReference type="CDD" id="cd04485">
    <property type="entry name" value="DnaE_OBF"/>
    <property type="match status" value="1"/>
</dbReference>
<dbReference type="CDD" id="cd07434">
    <property type="entry name" value="PHP_PolIIIA_DnaE2"/>
    <property type="match status" value="1"/>
</dbReference>
<dbReference type="Gene3D" id="1.10.150.870">
    <property type="match status" value="1"/>
</dbReference>
<dbReference type="Gene3D" id="3.20.20.140">
    <property type="entry name" value="Metal-dependent hydrolases"/>
    <property type="match status" value="1"/>
</dbReference>
<dbReference type="HAMAP" id="MF_01902">
    <property type="entry name" value="DNApol_error_prone"/>
    <property type="match status" value="1"/>
</dbReference>
<dbReference type="InterPro" id="IPR011708">
    <property type="entry name" value="DNA_pol3_alpha_NTPase_dom"/>
</dbReference>
<dbReference type="InterPro" id="IPR040982">
    <property type="entry name" value="DNA_pol3_finger"/>
</dbReference>
<dbReference type="InterPro" id="IPR023073">
    <property type="entry name" value="DnaE2"/>
</dbReference>
<dbReference type="InterPro" id="IPR004805">
    <property type="entry name" value="DnaE2/DnaE/PolC"/>
</dbReference>
<dbReference type="InterPro" id="IPR029460">
    <property type="entry name" value="DNAPol_HHH"/>
</dbReference>
<dbReference type="InterPro" id="IPR004365">
    <property type="entry name" value="NA-bd_OB_tRNA"/>
</dbReference>
<dbReference type="InterPro" id="IPR004013">
    <property type="entry name" value="PHP_dom"/>
</dbReference>
<dbReference type="InterPro" id="IPR003141">
    <property type="entry name" value="Pol/His_phosphatase_N"/>
</dbReference>
<dbReference type="InterPro" id="IPR016195">
    <property type="entry name" value="Pol/histidinol_Pase-like"/>
</dbReference>
<dbReference type="NCBIfam" id="TIGR00594">
    <property type="entry name" value="polc"/>
    <property type="match status" value="1"/>
</dbReference>
<dbReference type="NCBIfam" id="NF004225">
    <property type="entry name" value="PRK05672.1"/>
    <property type="match status" value="1"/>
</dbReference>
<dbReference type="PANTHER" id="PTHR32294">
    <property type="entry name" value="DNA POLYMERASE III SUBUNIT ALPHA"/>
    <property type="match status" value="1"/>
</dbReference>
<dbReference type="PANTHER" id="PTHR32294:SF4">
    <property type="entry name" value="ERROR-PRONE DNA POLYMERASE"/>
    <property type="match status" value="1"/>
</dbReference>
<dbReference type="Pfam" id="PF07733">
    <property type="entry name" value="DNA_pol3_alpha"/>
    <property type="match status" value="1"/>
</dbReference>
<dbReference type="Pfam" id="PF17657">
    <property type="entry name" value="DNA_pol3_finger"/>
    <property type="match status" value="1"/>
</dbReference>
<dbReference type="Pfam" id="PF14579">
    <property type="entry name" value="HHH_6"/>
    <property type="match status" value="1"/>
</dbReference>
<dbReference type="Pfam" id="PF02811">
    <property type="entry name" value="PHP"/>
    <property type="match status" value="1"/>
</dbReference>
<dbReference type="Pfam" id="PF01336">
    <property type="entry name" value="tRNA_anti-codon"/>
    <property type="match status" value="1"/>
</dbReference>
<dbReference type="SMART" id="SM00481">
    <property type="entry name" value="POLIIIAc"/>
    <property type="match status" value="1"/>
</dbReference>
<dbReference type="SUPFAM" id="SSF89550">
    <property type="entry name" value="PHP domain-like"/>
    <property type="match status" value="1"/>
</dbReference>
<protein>
    <recommendedName>
        <fullName evidence="1">Error-prone DNA polymerase</fullName>
        <ecNumber evidence="1">2.7.7.7</ecNumber>
    </recommendedName>
</protein>
<accession>Q5GX78</accession>
<evidence type="ECO:0000255" key="1">
    <source>
        <dbReference type="HAMAP-Rule" id="MF_01902"/>
    </source>
</evidence>
<feature type="chain" id="PRO_0000103407" description="Error-prone DNA polymerase">
    <location>
        <begin position="1"/>
        <end position="1083"/>
    </location>
</feature>
<keyword id="KW-0963">Cytoplasm</keyword>
<keyword id="KW-0227">DNA damage</keyword>
<keyword id="KW-0234">DNA repair</keyword>
<keyword id="KW-0235">DNA replication</keyword>
<keyword id="KW-0239">DNA-directed DNA polymerase</keyword>
<keyword id="KW-0548">Nucleotidyltransferase</keyword>
<keyword id="KW-1185">Reference proteome</keyword>
<keyword id="KW-0808">Transferase</keyword>
<gene>
    <name evidence="1" type="primary">dnaE2</name>
    <name type="ordered locus">XOO3439</name>
</gene>
<organism>
    <name type="scientific">Xanthomonas oryzae pv. oryzae (strain KACC10331 / KXO85)</name>
    <dbReference type="NCBI Taxonomy" id="291331"/>
    <lineage>
        <taxon>Bacteria</taxon>
        <taxon>Pseudomonadati</taxon>
        <taxon>Pseudomonadota</taxon>
        <taxon>Gammaproteobacteria</taxon>
        <taxon>Lysobacterales</taxon>
        <taxon>Lysobacteraceae</taxon>
        <taxon>Xanthomonas</taxon>
    </lineage>
</organism>
<proteinExistence type="inferred from homology"/>
<comment type="function">
    <text evidence="1">DNA polymerase involved in damage-induced mutagenesis and translesion synthesis (TLS). It is not the major replicative DNA polymerase.</text>
</comment>
<comment type="catalytic activity">
    <reaction evidence="1">
        <text>DNA(n) + a 2'-deoxyribonucleoside 5'-triphosphate = DNA(n+1) + diphosphate</text>
        <dbReference type="Rhea" id="RHEA:22508"/>
        <dbReference type="Rhea" id="RHEA-COMP:17339"/>
        <dbReference type="Rhea" id="RHEA-COMP:17340"/>
        <dbReference type="ChEBI" id="CHEBI:33019"/>
        <dbReference type="ChEBI" id="CHEBI:61560"/>
        <dbReference type="ChEBI" id="CHEBI:173112"/>
        <dbReference type="EC" id="2.7.7.7"/>
    </reaction>
</comment>
<comment type="subcellular location">
    <subcellularLocation>
        <location evidence="1">Cytoplasm</location>
    </subcellularLocation>
</comment>
<comment type="similarity">
    <text evidence="1">Belongs to the DNA polymerase type-C family. DnaE2 subfamily.</text>
</comment>